<gene>
    <name evidence="1" type="primary">ycf3</name>
    <name type="ordered locus">Grc000131</name>
</gene>
<accession>Q6B8S3</accession>
<dbReference type="EMBL" id="AY673996">
    <property type="protein sequence ID" value="AAT79712.1"/>
    <property type="molecule type" value="Genomic_DNA"/>
</dbReference>
<dbReference type="RefSeq" id="YP_063637.1">
    <property type="nucleotide sequence ID" value="NC_006137.1"/>
</dbReference>
<dbReference type="SMR" id="Q6B8S3"/>
<dbReference type="GeneID" id="2943936"/>
<dbReference type="GO" id="GO:0009535">
    <property type="term" value="C:chloroplast thylakoid membrane"/>
    <property type="evidence" value="ECO:0007669"/>
    <property type="project" value="UniProtKB-SubCell"/>
</dbReference>
<dbReference type="GO" id="GO:0015979">
    <property type="term" value="P:photosynthesis"/>
    <property type="evidence" value="ECO:0007669"/>
    <property type="project" value="UniProtKB-UniRule"/>
</dbReference>
<dbReference type="Gene3D" id="1.25.40.10">
    <property type="entry name" value="Tetratricopeptide repeat domain"/>
    <property type="match status" value="1"/>
</dbReference>
<dbReference type="HAMAP" id="MF_00439">
    <property type="entry name" value="Ycf3"/>
    <property type="match status" value="1"/>
</dbReference>
<dbReference type="InterPro" id="IPR022818">
    <property type="entry name" value="PSI_Ycf3_assembly"/>
</dbReference>
<dbReference type="InterPro" id="IPR011990">
    <property type="entry name" value="TPR-like_helical_dom_sf"/>
</dbReference>
<dbReference type="InterPro" id="IPR019734">
    <property type="entry name" value="TPR_rpt"/>
</dbReference>
<dbReference type="InterPro" id="IPR051685">
    <property type="entry name" value="Ycf3/AcsC/BcsC/TPR_MFPF"/>
</dbReference>
<dbReference type="NCBIfam" id="NF002725">
    <property type="entry name" value="PRK02603.1"/>
    <property type="match status" value="1"/>
</dbReference>
<dbReference type="PANTHER" id="PTHR44943">
    <property type="entry name" value="CELLULOSE SYNTHASE OPERON PROTEIN C"/>
    <property type="match status" value="1"/>
</dbReference>
<dbReference type="PANTHER" id="PTHR44943:SF8">
    <property type="entry name" value="TPR REPEAT-CONTAINING PROTEIN MJ0263"/>
    <property type="match status" value="1"/>
</dbReference>
<dbReference type="Pfam" id="PF00515">
    <property type="entry name" value="TPR_1"/>
    <property type="match status" value="1"/>
</dbReference>
<dbReference type="SMART" id="SM00028">
    <property type="entry name" value="TPR"/>
    <property type="match status" value="3"/>
</dbReference>
<dbReference type="SUPFAM" id="SSF48452">
    <property type="entry name" value="TPR-like"/>
    <property type="match status" value="1"/>
</dbReference>
<dbReference type="PROSITE" id="PS50005">
    <property type="entry name" value="TPR"/>
    <property type="match status" value="3"/>
</dbReference>
<dbReference type="PROSITE" id="PS50293">
    <property type="entry name" value="TPR_REGION"/>
    <property type="match status" value="1"/>
</dbReference>
<name>YCF3_GRATL</name>
<keyword id="KW-0150">Chloroplast</keyword>
<keyword id="KW-0472">Membrane</keyword>
<keyword id="KW-0602">Photosynthesis</keyword>
<keyword id="KW-0934">Plastid</keyword>
<keyword id="KW-0677">Repeat</keyword>
<keyword id="KW-0793">Thylakoid</keyword>
<keyword id="KW-0802">TPR repeat</keyword>
<protein>
    <recommendedName>
        <fullName evidence="1">Photosystem I assembly protein Ycf3</fullName>
    </recommendedName>
</protein>
<reference key="1">
    <citation type="journal article" date="2004" name="J. Mol. Evol.">
        <title>Comparative analysis of the complete plastid genome sequence of the red alga Gracilaria tenuistipitata var. liui provides insights into the evolution of rhodoplasts and their relationship to other plastids.</title>
        <authorList>
            <person name="Hagopian J.C."/>
            <person name="Reis M."/>
            <person name="Kitajima J.P."/>
            <person name="Bhattacharya D."/>
            <person name="de Oliveira M.C."/>
        </authorList>
    </citation>
    <scope>NUCLEOTIDE SEQUENCE [LARGE SCALE GENOMIC DNA]</scope>
</reference>
<geneLocation type="chloroplast"/>
<evidence type="ECO:0000255" key="1">
    <source>
        <dbReference type="HAMAP-Rule" id="MF_00439"/>
    </source>
</evidence>
<sequence>MPRLQKNDNFIDKTFTVLADIILKILPTTKEEKQAFCYYRDGMSAQSEGEYAEALENYYEALRLEEDPYDRSYIIYNIGLIYASNGEHIKALEYYHQSLELNPRLPQAFNNIAIIYHYQGLKAADKQDNNMSKSMFDKAAEYWKQAIYLAPNNYIEAQNWLKTTGRLNNK</sequence>
<feature type="chain" id="PRO_0000217803" description="Photosystem I assembly protein Ycf3">
    <location>
        <begin position="1"/>
        <end position="170"/>
    </location>
</feature>
<feature type="repeat" description="TPR 1">
    <location>
        <begin position="35"/>
        <end position="68"/>
    </location>
</feature>
<feature type="repeat" description="TPR 2">
    <location>
        <begin position="72"/>
        <end position="105"/>
    </location>
</feature>
<feature type="repeat" description="TPR 3">
    <location>
        <begin position="120"/>
        <end position="153"/>
    </location>
</feature>
<comment type="function">
    <text evidence="1">Essential for the assembly of the photosystem I (PSI) complex. May act as a chaperone-like factor to guide the assembly of the PSI subunits.</text>
</comment>
<comment type="subcellular location">
    <subcellularLocation>
        <location evidence="1">Plastid</location>
        <location evidence="1">Chloroplast thylakoid membrane</location>
        <topology evidence="1">Peripheral membrane protein</topology>
    </subcellularLocation>
</comment>
<comment type="similarity">
    <text evidence="1">Belongs to the Ycf3 family.</text>
</comment>
<organism>
    <name type="scientific">Gracilaria tenuistipitata var. liui</name>
    <name type="common">Red alga</name>
    <dbReference type="NCBI Taxonomy" id="285951"/>
    <lineage>
        <taxon>Eukaryota</taxon>
        <taxon>Rhodophyta</taxon>
        <taxon>Florideophyceae</taxon>
        <taxon>Rhodymeniophycidae</taxon>
        <taxon>Gracilariales</taxon>
        <taxon>Gracilariaceae</taxon>
        <taxon>Gracilaria</taxon>
        <taxon>Gracilaria tenuistipitata</taxon>
    </lineage>
</organism>
<proteinExistence type="inferred from homology"/>